<organismHost>
    <name type="scientific">Homo sapiens</name>
    <name type="common">Human</name>
    <dbReference type="NCBI Taxonomy" id="9606"/>
</organismHost>
<evidence type="ECO:0000255" key="1">
    <source>
        <dbReference type="HAMAP-Rule" id="MF_04091"/>
    </source>
</evidence>
<comment type="function">
    <text evidence="1">Plays an essential role in the virus replication cycle by acting as a viroporin. Creates a pore in the host endoplasmic reticulum and as a consequence releases Ca(2+) in the cytoplasm of infected cell. In turn, high levels of cytoplasmic calcium trigger membrane trafficking and transport of viral ER-associated proteins to viroplasms, sites of viral genome replication and immature particle assembly.</text>
</comment>
<comment type="function">
    <text evidence="1">The secreted form acts as an enterotoxin that causes phospholipase C-dependent elevation of the intracellular calcium concentration in host intestinal mucosa cells. Increased concentration of intracellular calcium disrupts the cytoskeleton and the tight junctions, raising the paracellular permeability. Potentiates chloride ion secretion through a calcium ion-dependent signaling pathway, inducing age-dependent diarrhea. To perform this enterotoxigenic role in vivo, NSP4 is released from infected enterocytes in a soluble form capable of diffusing within the intestinal lumen and interacting with host plasma membrane receptors on neighboring epithelial cells such as integrins ITGA1/ITGB1 and ITGA2/ITGB1.</text>
</comment>
<comment type="subunit">
    <text evidence="1">Homotetramer. Interacts with the immature particle in the viroplasm. Interacts with host CAV1, early and late in infection. Interacts with host integrin ITGA1/ITGB1 heterodimer. Interacts with host integrin ITGA2/ITGB1 heterodimer. Interaction with microtubules blocks trafficking to the Golgi apparatus.</text>
</comment>
<comment type="subcellular location">
    <subcellularLocation>
        <location evidence="1">Host rough endoplasmic reticulum membrane</location>
        <topology evidence="1">Single-pass type III membrane protein</topology>
    </subcellularLocation>
    <subcellularLocation>
        <location evidence="1">Host membrane</location>
        <location evidence="1">Host caveola</location>
        <topology evidence="1">Single-pass type III membrane protein</topology>
    </subcellularLocation>
    <subcellularLocation>
        <location evidence="1">Secreted</location>
    </subcellularLocation>
    <text evidence="1">NSP4 also localizes in vesicular structures which contain autophagosomal markers and associate with viroplasms in virus-infected cells. Additionally, a soluble form of glycosylated NSP4 is secreted despite retention of its transmembrane domain.</text>
</comment>
<comment type="domain">
    <text evidence="1">Binds 1 calcium ion per tetramer.</text>
</comment>
<comment type="PTM">
    <text evidence="1">The N-glycosyl content is primarily Man(9)GlcNAc, with a small amount of Man(8)GlcNAc.</text>
</comment>
<comment type="similarity">
    <text evidence="1">Belongs to the rotavirus NSP4 family.</text>
</comment>
<proteinExistence type="evidence at transcript level"/>
<feature type="chain" id="PRO_0000369489" description="Non-structural glycoprotein 4">
    <location>
        <begin position="1"/>
        <end position="175"/>
    </location>
</feature>
<feature type="topological domain" description="Lumenal" evidence="1">
    <location>
        <begin position="1"/>
        <end position="28"/>
    </location>
</feature>
<feature type="transmembrane region" description="Helical; Signal-anchor for type III membrane protein" evidence="1">
    <location>
        <begin position="29"/>
        <end position="51"/>
    </location>
</feature>
<feature type="topological domain" description="Cytoplasmic" evidence="1">
    <location>
        <begin position="52"/>
        <end position="175"/>
    </location>
</feature>
<feature type="binding site" evidence="1">
    <location>
        <position position="120"/>
    </location>
    <ligand>
        <name>Ca(2+)</name>
        <dbReference type="ChEBI" id="CHEBI:29108"/>
    </ligand>
</feature>
<feature type="binding site" evidence="1">
    <location>
        <position position="123"/>
    </location>
    <ligand>
        <name>Ca(2+)</name>
        <dbReference type="ChEBI" id="CHEBI:29108"/>
    </ligand>
</feature>
<feature type="glycosylation site" description="N-linked (GlcNAc...) asparagine; by host" evidence="1">
    <location>
        <position position="8"/>
    </location>
</feature>
<feature type="glycosylation site" description="N-linked (GlcNAc...) asparagine; by host" evidence="1">
    <location>
        <position position="18"/>
    </location>
</feature>
<feature type="sequence variant" description="In strain: M-attenuated.">
    <original>T</original>
    <variation>I</variation>
    <location>
        <position position="53"/>
    </location>
</feature>
<feature type="sequence variant" description="In strain: M-attenuated.">
    <original>K</original>
    <variation>E</variation>
    <location>
        <position position="104"/>
    </location>
</feature>
<accession>O92374</accession>
<accession>Q9YS19</accession>
<protein>
    <recommendedName>
        <fullName evidence="1">Non-structural glycoprotein 4</fullName>
        <shortName evidence="1">NSP4</shortName>
    </recommendedName>
    <alternativeName>
        <fullName evidence="1">NCVP5</fullName>
    </alternativeName>
    <alternativeName>
        <fullName evidence="1">NS28</fullName>
    </alternativeName>
</protein>
<organism>
    <name type="scientific">Rotavirus A (strain RVA/Human/United States/M/1976/G3P[X])</name>
    <name type="common">RV-A</name>
    <dbReference type="NCBI Taxonomy" id="578834"/>
    <lineage>
        <taxon>Viruses</taxon>
        <taxon>Riboviria</taxon>
        <taxon>Orthornavirae</taxon>
        <taxon>Duplornaviricota</taxon>
        <taxon>Resentoviricetes</taxon>
        <taxon>Reovirales</taxon>
        <taxon>Sedoreoviridae</taxon>
        <taxon>Rotavirus</taxon>
        <taxon>Rotavirus A</taxon>
    </lineage>
</organism>
<reference key="1">
    <citation type="journal article" date="1999" name="Virus Genes">
        <title>Comparisons of nucleotide and deduced amino acid sequences of NSP4 genes of virulent and attenuated pairs of group A and C rotaviruses.</title>
        <authorList>
            <person name="Chang K.O."/>
            <person name="Kim Y.J."/>
            <person name="Saif L.J."/>
        </authorList>
    </citation>
    <scope>NUCLEOTIDE SEQUENCE [MRNA]</scope>
    <source>
        <strain>M-attenuated</strain>
        <strain>M-virulent</strain>
    </source>
</reference>
<keyword id="KW-1072">Activation of host autophagy by virus</keyword>
<keyword id="KW-0106">Calcium</keyword>
<keyword id="KW-0260">Enterotoxin</keyword>
<keyword id="KW-0325">Glycoprotein</keyword>
<keyword id="KW-1038">Host endoplasmic reticulum</keyword>
<keyword id="KW-1043">Host membrane</keyword>
<keyword id="KW-0945">Host-virus interaction</keyword>
<keyword id="KW-0407">Ion channel</keyword>
<keyword id="KW-0406">Ion transport</keyword>
<keyword id="KW-0472">Membrane</keyword>
<keyword id="KW-0479">Metal-binding</keyword>
<keyword id="KW-0964">Secreted</keyword>
<keyword id="KW-0735">Signal-anchor</keyword>
<keyword id="KW-0800">Toxin</keyword>
<keyword id="KW-0812">Transmembrane</keyword>
<keyword id="KW-1133">Transmembrane helix</keyword>
<keyword id="KW-0813">Transport</keyword>
<keyword id="KW-1182">Viral ion channel</keyword>
<keyword id="KW-0843">Virulence</keyword>
<sequence>MDKLADLNYTLSVITLMNDTLHSIIQDPGMAYFPYIASVLTVLFTLHKASIPTMKIALKTSKCSYKVIKCCIVTIINTLLKLAGYKEQVTTKDEIEQQMDRIIKEMRRQLEMIDKLTTREIEQVELLKRIHDNLIIKPVDVIDMSKEFNQKNIKTLDEWESGKNPYEPLEVTASM</sequence>
<name>NSP4_ROTAM</name>
<dbReference type="EMBL" id="AF093201">
    <property type="protein sequence ID" value="AAC83710.1"/>
    <property type="molecule type" value="mRNA"/>
</dbReference>
<dbReference type="EMBL" id="AF093782">
    <property type="protein sequence ID" value="AAC99775.1"/>
    <property type="molecule type" value="mRNA"/>
</dbReference>
<dbReference type="SMR" id="O92374"/>
<dbReference type="GO" id="GO:0005576">
    <property type="term" value="C:extracellular region"/>
    <property type="evidence" value="ECO:0007669"/>
    <property type="project" value="UniProtKB-SubCell"/>
</dbReference>
<dbReference type="GO" id="GO:0044155">
    <property type="term" value="C:host caveola"/>
    <property type="evidence" value="ECO:0007669"/>
    <property type="project" value="UniProtKB-SubCell"/>
</dbReference>
<dbReference type="GO" id="GO:0044169">
    <property type="term" value="C:host cell rough endoplasmic reticulum membrane"/>
    <property type="evidence" value="ECO:0007669"/>
    <property type="project" value="UniProtKB-SubCell"/>
</dbReference>
<dbReference type="GO" id="GO:0016020">
    <property type="term" value="C:membrane"/>
    <property type="evidence" value="ECO:0007669"/>
    <property type="project" value="UniProtKB-UniRule"/>
</dbReference>
<dbReference type="GO" id="GO:0015267">
    <property type="term" value="F:channel activity"/>
    <property type="evidence" value="ECO:0007669"/>
    <property type="project" value="UniProtKB-KW"/>
</dbReference>
<dbReference type="GO" id="GO:0046872">
    <property type="term" value="F:metal ion binding"/>
    <property type="evidence" value="ECO:0007669"/>
    <property type="project" value="UniProtKB-UniRule"/>
</dbReference>
<dbReference type="GO" id="GO:0090729">
    <property type="term" value="F:toxin activity"/>
    <property type="evidence" value="ECO:0007669"/>
    <property type="project" value="UniProtKB-UniRule"/>
</dbReference>
<dbReference type="GO" id="GO:0034220">
    <property type="term" value="P:monoatomic ion transmembrane transport"/>
    <property type="evidence" value="ECO:0007669"/>
    <property type="project" value="UniProtKB-KW"/>
</dbReference>
<dbReference type="GO" id="GO:0039520">
    <property type="term" value="P:symbiont-mediated activation of host autophagy"/>
    <property type="evidence" value="ECO:0007669"/>
    <property type="project" value="UniProtKB-KW"/>
</dbReference>
<dbReference type="GO" id="GO:0016032">
    <property type="term" value="P:viral process"/>
    <property type="evidence" value="ECO:0007669"/>
    <property type="project" value="UniProtKB-UniRule"/>
</dbReference>
<dbReference type="Gene3D" id="1.20.5.430">
    <property type="match status" value="1"/>
</dbReference>
<dbReference type="HAMAP" id="MF_04091">
    <property type="entry name" value="ROTA_NSP4"/>
    <property type="match status" value="1"/>
</dbReference>
<dbReference type="InterPro" id="IPR002107">
    <property type="entry name" value="Rotavirus_NSP4"/>
</dbReference>
<dbReference type="Pfam" id="PF01452">
    <property type="entry name" value="Rota_NSP4"/>
    <property type="match status" value="1"/>
</dbReference>
<dbReference type="SUPFAM" id="SSF58030">
    <property type="entry name" value="Rotavirus nonstructural proteins"/>
    <property type="match status" value="1"/>
</dbReference>